<keyword id="KW-0067">ATP-binding</keyword>
<keyword id="KW-0436">Ligase</keyword>
<keyword id="KW-0547">Nucleotide-binding</keyword>
<keyword id="KW-0648">Protein biosynthesis</keyword>
<accession>Q02A54</accession>
<proteinExistence type="inferred from homology"/>
<dbReference type="EC" id="6.3.5.-" evidence="1"/>
<dbReference type="EMBL" id="CP000473">
    <property type="protein sequence ID" value="ABJ82072.1"/>
    <property type="molecule type" value="Genomic_DNA"/>
</dbReference>
<dbReference type="SMR" id="Q02A54"/>
<dbReference type="STRING" id="234267.Acid_1074"/>
<dbReference type="KEGG" id="sus:Acid_1074"/>
<dbReference type="eggNOG" id="COG0721">
    <property type="taxonomic scope" value="Bacteria"/>
</dbReference>
<dbReference type="HOGENOM" id="CLU_105899_1_1_0"/>
<dbReference type="InParanoid" id="Q02A54"/>
<dbReference type="OrthoDB" id="9813938at2"/>
<dbReference type="GO" id="GO:0050566">
    <property type="term" value="F:asparaginyl-tRNA synthase (glutamine-hydrolyzing) activity"/>
    <property type="evidence" value="ECO:0007669"/>
    <property type="project" value="RHEA"/>
</dbReference>
<dbReference type="GO" id="GO:0005524">
    <property type="term" value="F:ATP binding"/>
    <property type="evidence" value="ECO:0007669"/>
    <property type="project" value="UniProtKB-KW"/>
</dbReference>
<dbReference type="GO" id="GO:0050567">
    <property type="term" value="F:glutaminyl-tRNA synthase (glutamine-hydrolyzing) activity"/>
    <property type="evidence" value="ECO:0007669"/>
    <property type="project" value="UniProtKB-UniRule"/>
</dbReference>
<dbReference type="GO" id="GO:0070681">
    <property type="term" value="P:glutaminyl-tRNAGln biosynthesis via transamidation"/>
    <property type="evidence" value="ECO:0007669"/>
    <property type="project" value="TreeGrafter"/>
</dbReference>
<dbReference type="GO" id="GO:0006450">
    <property type="term" value="P:regulation of translational fidelity"/>
    <property type="evidence" value="ECO:0007669"/>
    <property type="project" value="InterPro"/>
</dbReference>
<dbReference type="GO" id="GO:0006412">
    <property type="term" value="P:translation"/>
    <property type="evidence" value="ECO:0007669"/>
    <property type="project" value="UniProtKB-UniRule"/>
</dbReference>
<dbReference type="Gene3D" id="1.10.20.60">
    <property type="entry name" value="Glu-tRNAGln amidotransferase C subunit, N-terminal domain"/>
    <property type="match status" value="1"/>
</dbReference>
<dbReference type="HAMAP" id="MF_00122">
    <property type="entry name" value="GatC"/>
    <property type="match status" value="1"/>
</dbReference>
<dbReference type="InterPro" id="IPR036113">
    <property type="entry name" value="Asp/Glu-ADT_sf_sub_c"/>
</dbReference>
<dbReference type="InterPro" id="IPR003837">
    <property type="entry name" value="GatC"/>
</dbReference>
<dbReference type="NCBIfam" id="TIGR00135">
    <property type="entry name" value="gatC"/>
    <property type="match status" value="1"/>
</dbReference>
<dbReference type="PANTHER" id="PTHR15004">
    <property type="entry name" value="GLUTAMYL-TRNA(GLN) AMIDOTRANSFERASE SUBUNIT C, MITOCHONDRIAL"/>
    <property type="match status" value="1"/>
</dbReference>
<dbReference type="PANTHER" id="PTHR15004:SF0">
    <property type="entry name" value="GLUTAMYL-TRNA(GLN) AMIDOTRANSFERASE SUBUNIT C, MITOCHONDRIAL"/>
    <property type="match status" value="1"/>
</dbReference>
<dbReference type="Pfam" id="PF02686">
    <property type="entry name" value="GatC"/>
    <property type="match status" value="1"/>
</dbReference>
<dbReference type="SUPFAM" id="SSF141000">
    <property type="entry name" value="Glu-tRNAGln amidotransferase C subunit"/>
    <property type="match status" value="1"/>
</dbReference>
<feature type="chain" id="PRO_1000016211" description="Aspartyl/glutamyl-tRNA(Asn/Gln) amidotransferase subunit C">
    <location>
        <begin position="1"/>
        <end position="99"/>
    </location>
</feature>
<sequence>MKITEKEVRYVAGLANLNLTEQEIARMQVDLDGILEHMARLNEIDTEGVAPMSQVLFEAEETATLRPDSPIPPLGNQAAMANAPQSGAGYFKVPKVIER</sequence>
<organism>
    <name type="scientific">Solibacter usitatus (strain Ellin6076)</name>
    <dbReference type="NCBI Taxonomy" id="234267"/>
    <lineage>
        <taxon>Bacteria</taxon>
        <taxon>Pseudomonadati</taxon>
        <taxon>Acidobacteriota</taxon>
        <taxon>Terriglobia</taxon>
        <taxon>Bryobacterales</taxon>
        <taxon>Solibacteraceae</taxon>
        <taxon>Candidatus Solibacter</taxon>
    </lineage>
</organism>
<reference key="1">
    <citation type="journal article" date="2009" name="Appl. Environ. Microbiol.">
        <title>Three genomes from the phylum Acidobacteria provide insight into the lifestyles of these microorganisms in soils.</title>
        <authorList>
            <person name="Ward N.L."/>
            <person name="Challacombe J.F."/>
            <person name="Janssen P.H."/>
            <person name="Henrissat B."/>
            <person name="Coutinho P.M."/>
            <person name="Wu M."/>
            <person name="Xie G."/>
            <person name="Haft D.H."/>
            <person name="Sait M."/>
            <person name="Badger J."/>
            <person name="Barabote R.D."/>
            <person name="Bradley B."/>
            <person name="Brettin T.S."/>
            <person name="Brinkac L.M."/>
            <person name="Bruce D."/>
            <person name="Creasy T."/>
            <person name="Daugherty S.C."/>
            <person name="Davidsen T.M."/>
            <person name="DeBoy R.T."/>
            <person name="Detter J.C."/>
            <person name="Dodson R.J."/>
            <person name="Durkin A.S."/>
            <person name="Ganapathy A."/>
            <person name="Gwinn-Giglio M."/>
            <person name="Han C.S."/>
            <person name="Khouri H."/>
            <person name="Kiss H."/>
            <person name="Kothari S.P."/>
            <person name="Madupu R."/>
            <person name="Nelson K.E."/>
            <person name="Nelson W.C."/>
            <person name="Paulsen I."/>
            <person name="Penn K."/>
            <person name="Ren Q."/>
            <person name="Rosovitz M.J."/>
            <person name="Selengut J.D."/>
            <person name="Shrivastava S."/>
            <person name="Sullivan S.A."/>
            <person name="Tapia R."/>
            <person name="Thompson L.S."/>
            <person name="Watkins K.L."/>
            <person name="Yang Q."/>
            <person name="Yu C."/>
            <person name="Zafar N."/>
            <person name="Zhou L."/>
            <person name="Kuske C.R."/>
        </authorList>
    </citation>
    <scope>NUCLEOTIDE SEQUENCE [LARGE SCALE GENOMIC DNA]</scope>
    <source>
        <strain>Ellin6076</strain>
    </source>
</reference>
<evidence type="ECO:0000255" key="1">
    <source>
        <dbReference type="HAMAP-Rule" id="MF_00122"/>
    </source>
</evidence>
<gene>
    <name evidence="1" type="primary">gatC</name>
    <name type="ordered locus">Acid_1074</name>
</gene>
<comment type="function">
    <text evidence="1">Allows the formation of correctly charged Asn-tRNA(Asn) or Gln-tRNA(Gln) through the transamidation of misacylated Asp-tRNA(Asn) or Glu-tRNA(Gln) in organisms which lack either or both of asparaginyl-tRNA or glutaminyl-tRNA synthetases. The reaction takes place in the presence of glutamine and ATP through an activated phospho-Asp-tRNA(Asn) or phospho-Glu-tRNA(Gln).</text>
</comment>
<comment type="catalytic activity">
    <reaction evidence="1">
        <text>L-glutamyl-tRNA(Gln) + L-glutamine + ATP + H2O = L-glutaminyl-tRNA(Gln) + L-glutamate + ADP + phosphate + H(+)</text>
        <dbReference type="Rhea" id="RHEA:17521"/>
        <dbReference type="Rhea" id="RHEA-COMP:9681"/>
        <dbReference type="Rhea" id="RHEA-COMP:9684"/>
        <dbReference type="ChEBI" id="CHEBI:15377"/>
        <dbReference type="ChEBI" id="CHEBI:15378"/>
        <dbReference type="ChEBI" id="CHEBI:29985"/>
        <dbReference type="ChEBI" id="CHEBI:30616"/>
        <dbReference type="ChEBI" id="CHEBI:43474"/>
        <dbReference type="ChEBI" id="CHEBI:58359"/>
        <dbReference type="ChEBI" id="CHEBI:78520"/>
        <dbReference type="ChEBI" id="CHEBI:78521"/>
        <dbReference type="ChEBI" id="CHEBI:456216"/>
    </reaction>
</comment>
<comment type="catalytic activity">
    <reaction evidence="1">
        <text>L-aspartyl-tRNA(Asn) + L-glutamine + ATP + H2O = L-asparaginyl-tRNA(Asn) + L-glutamate + ADP + phosphate + 2 H(+)</text>
        <dbReference type="Rhea" id="RHEA:14513"/>
        <dbReference type="Rhea" id="RHEA-COMP:9674"/>
        <dbReference type="Rhea" id="RHEA-COMP:9677"/>
        <dbReference type="ChEBI" id="CHEBI:15377"/>
        <dbReference type="ChEBI" id="CHEBI:15378"/>
        <dbReference type="ChEBI" id="CHEBI:29985"/>
        <dbReference type="ChEBI" id="CHEBI:30616"/>
        <dbReference type="ChEBI" id="CHEBI:43474"/>
        <dbReference type="ChEBI" id="CHEBI:58359"/>
        <dbReference type="ChEBI" id="CHEBI:78515"/>
        <dbReference type="ChEBI" id="CHEBI:78516"/>
        <dbReference type="ChEBI" id="CHEBI:456216"/>
    </reaction>
</comment>
<comment type="subunit">
    <text evidence="1">Heterotrimer of A, B and C subunits.</text>
</comment>
<comment type="similarity">
    <text evidence="1">Belongs to the GatC family.</text>
</comment>
<name>GATC_SOLUE</name>
<protein>
    <recommendedName>
        <fullName evidence="1">Aspartyl/glutamyl-tRNA(Asn/Gln) amidotransferase subunit C</fullName>
        <shortName evidence="1">Asp/Glu-ADT subunit C</shortName>
        <ecNumber evidence="1">6.3.5.-</ecNumber>
    </recommendedName>
</protein>